<keyword id="KW-0963">Cytoplasm</keyword>
<keyword id="KW-0312">Gluconeogenesis</keyword>
<keyword id="KW-0324">Glycolysis</keyword>
<keyword id="KW-0413">Isomerase</keyword>
<accession>Q02FU0</accession>
<dbReference type="EC" id="5.3.1.9" evidence="1"/>
<dbReference type="EMBL" id="CP000438">
    <property type="protein sequence ID" value="ABJ14115.1"/>
    <property type="molecule type" value="Genomic_DNA"/>
</dbReference>
<dbReference type="RefSeq" id="WP_003100194.1">
    <property type="nucleotide sequence ID" value="NZ_CP034244.1"/>
</dbReference>
<dbReference type="SMR" id="Q02FU0"/>
<dbReference type="KEGG" id="pau:PA14_62620"/>
<dbReference type="PseudoCAP" id="PA14_62620"/>
<dbReference type="HOGENOM" id="CLU_017947_3_1_6"/>
<dbReference type="BioCyc" id="PAER208963:G1G74-5294-MONOMER"/>
<dbReference type="UniPathway" id="UPA00109">
    <property type="reaction ID" value="UER00181"/>
</dbReference>
<dbReference type="UniPathway" id="UPA00138"/>
<dbReference type="Proteomes" id="UP000000653">
    <property type="component" value="Chromosome"/>
</dbReference>
<dbReference type="GO" id="GO:0005829">
    <property type="term" value="C:cytosol"/>
    <property type="evidence" value="ECO:0007669"/>
    <property type="project" value="TreeGrafter"/>
</dbReference>
<dbReference type="GO" id="GO:0097367">
    <property type="term" value="F:carbohydrate derivative binding"/>
    <property type="evidence" value="ECO:0007669"/>
    <property type="project" value="InterPro"/>
</dbReference>
<dbReference type="GO" id="GO:0004347">
    <property type="term" value="F:glucose-6-phosphate isomerase activity"/>
    <property type="evidence" value="ECO:0007669"/>
    <property type="project" value="UniProtKB-UniRule"/>
</dbReference>
<dbReference type="GO" id="GO:0048029">
    <property type="term" value="F:monosaccharide binding"/>
    <property type="evidence" value="ECO:0007669"/>
    <property type="project" value="TreeGrafter"/>
</dbReference>
<dbReference type="GO" id="GO:0006094">
    <property type="term" value="P:gluconeogenesis"/>
    <property type="evidence" value="ECO:0007669"/>
    <property type="project" value="UniProtKB-UniRule"/>
</dbReference>
<dbReference type="GO" id="GO:0051156">
    <property type="term" value="P:glucose 6-phosphate metabolic process"/>
    <property type="evidence" value="ECO:0007669"/>
    <property type="project" value="TreeGrafter"/>
</dbReference>
<dbReference type="GO" id="GO:0006096">
    <property type="term" value="P:glycolytic process"/>
    <property type="evidence" value="ECO:0007669"/>
    <property type="project" value="UniProtKB-UniRule"/>
</dbReference>
<dbReference type="CDD" id="cd05015">
    <property type="entry name" value="SIS_PGI_1"/>
    <property type="match status" value="1"/>
</dbReference>
<dbReference type="CDD" id="cd05016">
    <property type="entry name" value="SIS_PGI_2"/>
    <property type="match status" value="1"/>
</dbReference>
<dbReference type="FunFam" id="3.40.50.10490:FF:000018">
    <property type="entry name" value="Glucose-6-phosphate isomerase"/>
    <property type="match status" value="1"/>
</dbReference>
<dbReference type="Gene3D" id="1.10.1390.10">
    <property type="match status" value="1"/>
</dbReference>
<dbReference type="Gene3D" id="3.40.50.10490">
    <property type="entry name" value="Glucose-6-phosphate isomerase like protein, domain 1"/>
    <property type="match status" value="2"/>
</dbReference>
<dbReference type="HAMAP" id="MF_00473">
    <property type="entry name" value="G6P_isomerase"/>
    <property type="match status" value="1"/>
</dbReference>
<dbReference type="InterPro" id="IPR001672">
    <property type="entry name" value="G6P_Isomerase"/>
</dbReference>
<dbReference type="InterPro" id="IPR023096">
    <property type="entry name" value="G6P_Isomerase_C"/>
</dbReference>
<dbReference type="InterPro" id="IPR018189">
    <property type="entry name" value="Phosphoglucose_isomerase_CS"/>
</dbReference>
<dbReference type="InterPro" id="IPR046348">
    <property type="entry name" value="SIS_dom_sf"/>
</dbReference>
<dbReference type="InterPro" id="IPR035476">
    <property type="entry name" value="SIS_PGI_1"/>
</dbReference>
<dbReference type="InterPro" id="IPR035482">
    <property type="entry name" value="SIS_PGI_2"/>
</dbReference>
<dbReference type="NCBIfam" id="NF001211">
    <property type="entry name" value="PRK00179.1"/>
    <property type="match status" value="1"/>
</dbReference>
<dbReference type="PANTHER" id="PTHR11469">
    <property type="entry name" value="GLUCOSE-6-PHOSPHATE ISOMERASE"/>
    <property type="match status" value="1"/>
</dbReference>
<dbReference type="PANTHER" id="PTHR11469:SF1">
    <property type="entry name" value="GLUCOSE-6-PHOSPHATE ISOMERASE"/>
    <property type="match status" value="1"/>
</dbReference>
<dbReference type="Pfam" id="PF00342">
    <property type="entry name" value="PGI"/>
    <property type="match status" value="1"/>
</dbReference>
<dbReference type="PRINTS" id="PR00662">
    <property type="entry name" value="G6PISOMERASE"/>
</dbReference>
<dbReference type="SUPFAM" id="SSF53697">
    <property type="entry name" value="SIS domain"/>
    <property type="match status" value="1"/>
</dbReference>
<dbReference type="PROSITE" id="PS00765">
    <property type="entry name" value="P_GLUCOSE_ISOMERASE_1"/>
    <property type="match status" value="1"/>
</dbReference>
<dbReference type="PROSITE" id="PS00174">
    <property type="entry name" value="P_GLUCOSE_ISOMERASE_2"/>
    <property type="match status" value="1"/>
</dbReference>
<dbReference type="PROSITE" id="PS51463">
    <property type="entry name" value="P_GLUCOSE_ISOMERASE_3"/>
    <property type="match status" value="1"/>
</dbReference>
<gene>
    <name evidence="1" type="primary">pgi</name>
    <name type="ordered locus">PA14_62620</name>
</gene>
<proteinExistence type="inferred from homology"/>
<organism>
    <name type="scientific">Pseudomonas aeruginosa (strain UCBPP-PA14)</name>
    <dbReference type="NCBI Taxonomy" id="208963"/>
    <lineage>
        <taxon>Bacteria</taxon>
        <taxon>Pseudomonadati</taxon>
        <taxon>Pseudomonadota</taxon>
        <taxon>Gammaproteobacteria</taxon>
        <taxon>Pseudomonadales</taxon>
        <taxon>Pseudomonadaceae</taxon>
        <taxon>Pseudomonas</taxon>
    </lineage>
</organism>
<protein>
    <recommendedName>
        <fullName evidence="1">Glucose-6-phosphate isomerase</fullName>
        <shortName evidence="1">GPI</shortName>
        <ecNumber evidence="1">5.3.1.9</ecNumber>
    </recommendedName>
    <alternativeName>
        <fullName evidence="1">Phosphoglucose isomerase</fullName>
        <shortName evidence="1">PGI</shortName>
    </alternativeName>
    <alternativeName>
        <fullName evidence="1">Phosphohexose isomerase</fullName>
        <shortName evidence="1">PHI</shortName>
    </alternativeName>
</protein>
<evidence type="ECO:0000255" key="1">
    <source>
        <dbReference type="HAMAP-Rule" id="MF_00473"/>
    </source>
</evidence>
<reference key="1">
    <citation type="journal article" date="2006" name="Genome Biol.">
        <title>Genomic analysis reveals that Pseudomonas aeruginosa virulence is combinatorial.</title>
        <authorList>
            <person name="Lee D.G."/>
            <person name="Urbach J.M."/>
            <person name="Wu G."/>
            <person name="Liberati N.T."/>
            <person name="Feinbaum R.L."/>
            <person name="Miyata S."/>
            <person name="Diggins L.T."/>
            <person name="He J."/>
            <person name="Saucier M."/>
            <person name="Deziel E."/>
            <person name="Friedman L."/>
            <person name="Li L."/>
            <person name="Grills G."/>
            <person name="Montgomery K."/>
            <person name="Kucherlapati R."/>
            <person name="Rahme L.G."/>
            <person name="Ausubel F.M."/>
        </authorList>
    </citation>
    <scope>NUCLEOTIDE SEQUENCE [LARGE SCALE GENOMIC DNA]</scope>
    <source>
        <strain>UCBPP-PA14</strain>
    </source>
</reference>
<feature type="chain" id="PRO_1000014002" description="Glucose-6-phosphate isomerase">
    <location>
        <begin position="1"/>
        <end position="554"/>
    </location>
</feature>
<feature type="active site" description="Proton donor" evidence="1">
    <location>
        <position position="359"/>
    </location>
</feature>
<feature type="active site" evidence="1">
    <location>
        <position position="390"/>
    </location>
</feature>
<feature type="active site" evidence="1">
    <location>
        <position position="518"/>
    </location>
</feature>
<sequence>MKHHLTPLDATQLDSWRALAAHRQELQDFRMRQAFIDDPERFKRFSFSACGLFLDFSKNLIRQDTIDLLVKLAEEARLSDAIRAMFDGEAINASERRPVLHTALRRPIGDKVLVDGVDVMPEVHRVLHQMTELVGYVHNGLWRGYTEKPITDVVNIGIGGSFLGPQLVSEALLPFAQKGVRCHYLANIDGSEFHELASRLNAETTLFIVSSKSFGTLETLKNAQAARAWYLAQGGTEEELYRHFIAVSSNKEAAIAFGIREENIFPMWDWVGGRYSLWSAIGLPIAMSIGISNFKELLSGAYNMDQHFQTAPFERNIPVLLGLLGVWYGDFWGANSHAILPYDYYLRNITDHLQQLDMESNGKSVRQDGTPVTSGTGPVIWGGVGCNGQHAYHQLLHQGTQLIPADFIVPVSSYNPVADHHQWLYANCLSQSQALMLGKSREEAEAELRAKGLPEAEVQRLAPHKVIPGNRPSNTLVVERISARRLGALIAMYEHKVYVQSILWGINAFDQWGVELGKELGKGVYSRLVGSEETPAEDASTQGLIDFFRGRHRG</sequence>
<comment type="function">
    <text evidence="1">Catalyzes the reversible isomerization of glucose-6-phosphate to fructose-6-phosphate.</text>
</comment>
<comment type="catalytic activity">
    <reaction evidence="1">
        <text>alpha-D-glucose 6-phosphate = beta-D-fructose 6-phosphate</text>
        <dbReference type="Rhea" id="RHEA:11816"/>
        <dbReference type="ChEBI" id="CHEBI:57634"/>
        <dbReference type="ChEBI" id="CHEBI:58225"/>
        <dbReference type="EC" id="5.3.1.9"/>
    </reaction>
</comment>
<comment type="pathway">
    <text evidence="1">Carbohydrate biosynthesis; gluconeogenesis.</text>
</comment>
<comment type="pathway">
    <text evidence="1">Carbohydrate degradation; glycolysis; D-glyceraldehyde 3-phosphate and glycerone phosphate from D-glucose: step 2/4.</text>
</comment>
<comment type="subcellular location">
    <subcellularLocation>
        <location evidence="1">Cytoplasm</location>
    </subcellularLocation>
</comment>
<comment type="similarity">
    <text evidence="1">Belongs to the GPI family.</text>
</comment>
<name>G6PI_PSEAB</name>